<name>PUR5_BURP1</name>
<feature type="chain" id="PRO_0000258341" description="Phosphoribosylformylglycinamidine cyclo-ligase">
    <location>
        <begin position="1"/>
        <end position="351"/>
    </location>
</feature>
<gene>
    <name evidence="1" type="primary">purM</name>
    <name type="ordered locus">BURPS1710b_3311</name>
</gene>
<evidence type="ECO:0000255" key="1">
    <source>
        <dbReference type="HAMAP-Rule" id="MF_00741"/>
    </source>
</evidence>
<sequence>MNPPKSAPDAQGLSYRDAGVDIDAGDALVDKIKPFAKKTLRDGVLGGIGGFGALFEVPKKYREPVLVSGTDGVGTKLKLAFHLNKHDTVGQDLVAMSVNDILVQGAEPLFFLDYFACGKLDVETAATVVKGIATGCELAGCALIGGETAEMPGMYPDGEYDLAGFAVGAVEKSKIIDGSTIAEGDVVLGLASSGIHSNGFSLVRKIIERANPDLSADFHGRSLADALMAPTRIYVKPLLALMEKIAVKGMAHITGGGLVENIPRVLRDGLTAELDQHAWPLPPLFQWLRQHGGVADAEMHRVFNCGIGMAVIVSAADADDALRQLADAGEQVWKIGTVRASREGEAQTVVV</sequence>
<keyword id="KW-0067">ATP-binding</keyword>
<keyword id="KW-0963">Cytoplasm</keyword>
<keyword id="KW-0436">Ligase</keyword>
<keyword id="KW-0547">Nucleotide-binding</keyword>
<keyword id="KW-0658">Purine biosynthesis</keyword>
<accession>Q3JP21</accession>
<organism>
    <name type="scientific">Burkholderia pseudomallei (strain 1710b)</name>
    <dbReference type="NCBI Taxonomy" id="320372"/>
    <lineage>
        <taxon>Bacteria</taxon>
        <taxon>Pseudomonadati</taxon>
        <taxon>Pseudomonadota</taxon>
        <taxon>Betaproteobacteria</taxon>
        <taxon>Burkholderiales</taxon>
        <taxon>Burkholderiaceae</taxon>
        <taxon>Burkholderia</taxon>
        <taxon>pseudomallei group</taxon>
    </lineage>
</organism>
<dbReference type="EC" id="6.3.3.1" evidence="1"/>
<dbReference type="EMBL" id="CP000124">
    <property type="protein sequence ID" value="ABA49845.1"/>
    <property type="molecule type" value="Genomic_DNA"/>
</dbReference>
<dbReference type="RefSeq" id="WP_004527676.1">
    <property type="nucleotide sequence ID" value="NC_007434.1"/>
</dbReference>
<dbReference type="SMR" id="Q3JP21"/>
<dbReference type="EnsemblBacteria" id="ABA49845">
    <property type="protein sequence ID" value="ABA49845"/>
    <property type="gene ID" value="BURPS1710b_3311"/>
</dbReference>
<dbReference type="KEGG" id="bpm:BURPS1710b_3311"/>
<dbReference type="HOGENOM" id="CLU_047116_0_0_4"/>
<dbReference type="UniPathway" id="UPA00074">
    <property type="reaction ID" value="UER00129"/>
</dbReference>
<dbReference type="Proteomes" id="UP000002700">
    <property type="component" value="Chromosome I"/>
</dbReference>
<dbReference type="GO" id="GO:0005829">
    <property type="term" value="C:cytosol"/>
    <property type="evidence" value="ECO:0007669"/>
    <property type="project" value="TreeGrafter"/>
</dbReference>
<dbReference type="GO" id="GO:0005524">
    <property type="term" value="F:ATP binding"/>
    <property type="evidence" value="ECO:0007669"/>
    <property type="project" value="UniProtKB-KW"/>
</dbReference>
<dbReference type="GO" id="GO:0004637">
    <property type="term" value="F:phosphoribosylamine-glycine ligase activity"/>
    <property type="evidence" value="ECO:0007669"/>
    <property type="project" value="TreeGrafter"/>
</dbReference>
<dbReference type="GO" id="GO:0004641">
    <property type="term" value="F:phosphoribosylformylglycinamidine cyclo-ligase activity"/>
    <property type="evidence" value="ECO:0007669"/>
    <property type="project" value="UniProtKB-UniRule"/>
</dbReference>
<dbReference type="GO" id="GO:0006189">
    <property type="term" value="P:'de novo' IMP biosynthetic process"/>
    <property type="evidence" value="ECO:0007669"/>
    <property type="project" value="UniProtKB-UniRule"/>
</dbReference>
<dbReference type="GO" id="GO:0046084">
    <property type="term" value="P:adenine biosynthetic process"/>
    <property type="evidence" value="ECO:0007669"/>
    <property type="project" value="TreeGrafter"/>
</dbReference>
<dbReference type="CDD" id="cd02196">
    <property type="entry name" value="PurM"/>
    <property type="match status" value="1"/>
</dbReference>
<dbReference type="FunFam" id="3.30.1330.10:FF:000001">
    <property type="entry name" value="Phosphoribosylformylglycinamidine cyclo-ligase"/>
    <property type="match status" value="1"/>
</dbReference>
<dbReference type="FunFam" id="3.90.650.10:FF:000001">
    <property type="entry name" value="Phosphoribosylformylglycinamidine cyclo-ligase"/>
    <property type="match status" value="1"/>
</dbReference>
<dbReference type="Gene3D" id="3.90.650.10">
    <property type="entry name" value="PurM-like C-terminal domain"/>
    <property type="match status" value="1"/>
</dbReference>
<dbReference type="Gene3D" id="3.30.1330.10">
    <property type="entry name" value="PurM-like, N-terminal domain"/>
    <property type="match status" value="1"/>
</dbReference>
<dbReference type="HAMAP" id="MF_00741">
    <property type="entry name" value="AIRS"/>
    <property type="match status" value="1"/>
</dbReference>
<dbReference type="InterPro" id="IPR010918">
    <property type="entry name" value="PurM-like_C_dom"/>
</dbReference>
<dbReference type="InterPro" id="IPR036676">
    <property type="entry name" value="PurM-like_C_sf"/>
</dbReference>
<dbReference type="InterPro" id="IPR016188">
    <property type="entry name" value="PurM-like_N"/>
</dbReference>
<dbReference type="InterPro" id="IPR036921">
    <property type="entry name" value="PurM-like_N_sf"/>
</dbReference>
<dbReference type="InterPro" id="IPR004733">
    <property type="entry name" value="PurM_cligase"/>
</dbReference>
<dbReference type="NCBIfam" id="TIGR00878">
    <property type="entry name" value="purM"/>
    <property type="match status" value="1"/>
</dbReference>
<dbReference type="PANTHER" id="PTHR10520:SF12">
    <property type="entry name" value="TRIFUNCTIONAL PURINE BIOSYNTHETIC PROTEIN ADENOSINE-3"/>
    <property type="match status" value="1"/>
</dbReference>
<dbReference type="PANTHER" id="PTHR10520">
    <property type="entry name" value="TRIFUNCTIONAL PURINE BIOSYNTHETIC PROTEIN ADENOSINE-3-RELATED"/>
    <property type="match status" value="1"/>
</dbReference>
<dbReference type="Pfam" id="PF00586">
    <property type="entry name" value="AIRS"/>
    <property type="match status" value="1"/>
</dbReference>
<dbReference type="Pfam" id="PF02769">
    <property type="entry name" value="AIRS_C"/>
    <property type="match status" value="1"/>
</dbReference>
<dbReference type="SUPFAM" id="SSF56042">
    <property type="entry name" value="PurM C-terminal domain-like"/>
    <property type="match status" value="1"/>
</dbReference>
<dbReference type="SUPFAM" id="SSF55326">
    <property type="entry name" value="PurM N-terminal domain-like"/>
    <property type="match status" value="1"/>
</dbReference>
<proteinExistence type="inferred from homology"/>
<reference key="1">
    <citation type="journal article" date="2010" name="Genome Biol. Evol.">
        <title>Continuing evolution of Burkholderia mallei through genome reduction and large-scale rearrangements.</title>
        <authorList>
            <person name="Losada L."/>
            <person name="Ronning C.M."/>
            <person name="DeShazer D."/>
            <person name="Woods D."/>
            <person name="Fedorova N."/>
            <person name="Kim H.S."/>
            <person name="Shabalina S.A."/>
            <person name="Pearson T.R."/>
            <person name="Brinkac L."/>
            <person name="Tan P."/>
            <person name="Nandi T."/>
            <person name="Crabtree J."/>
            <person name="Badger J."/>
            <person name="Beckstrom-Sternberg S."/>
            <person name="Saqib M."/>
            <person name="Schutzer S.E."/>
            <person name="Keim P."/>
            <person name="Nierman W.C."/>
        </authorList>
    </citation>
    <scope>NUCLEOTIDE SEQUENCE [LARGE SCALE GENOMIC DNA]</scope>
    <source>
        <strain>1710b</strain>
    </source>
</reference>
<comment type="catalytic activity">
    <reaction evidence="1">
        <text>2-formamido-N(1)-(5-O-phospho-beta-D-ribosyl)acetamidine + ATP = 5-amino-1-(5-phospho-beta-D-ribosyl)imidazole + ADP + phosphate + H(+)</text>
        <dbReference type="Rhea" id="RHEA:23032"/>
        <dbReference type="ChEBI" id="CHEBI:15378"/>
        <dbReference type="ChEBI" id="CHEBI:30616"/>
        <dbReference type="ChEBI" id="CHEBI:43474"/>
        <dbReference type="ChEBI" id="CHEBI:137981"/>
        <dbReference type="ChEBI" id="CHEBI:147287"/>
        <dbReference type="ChEBI" id="CHEBI:456216"/>
        <dbReference type="EC" id="6.3.3.1"/>
    </reaction>
</comment>
<comment type="pathway">
    <text evidence="1">Purine metabolism; IMP biosynthesis via de novo pathway; 5-amino-1-(5-phospho-D-ribosyl)imidazole from N(2)-formyl-N(1)-(5-phospho-D-ribosyl)glycinamide: step 2/2.</text>
</comment>
<comment type="subcellular location">
    <subcellularLocation>
        <location evidence="1">Cytoplasm</location>
    </subcellularLocation>
</comment>
<comment type="similarity">
    <text evidence="1">Belongs to the AIR synthase family.</text>
</comment>
<protein>
    <recommendedName>
        <fullName evidence="1">Phosphoribosylformylglycinamidine cyclo-ligase</fullName>
        <ecNumber evidence="1">6.3.3.1</ecNumber>
    </recommendedName>
    <alternativeName>
        <fullName evidence="1">AIR synthase</fullName>
    </alternativeName>
    <alternativeName>
        <fullName evidence="1">AIRS</fullName>
    </alternativeName>
    <alternativeName>
        <fullName evidence="1">Phosphoribosyl-aminoimidazole synthetase</fullName>
    </alternativeName>
</protein>